<dbReference type="EC" id="6.3.4.19" evidence="1"/>
<dbReference type="EMBL" id="AE006468">
    <property type="protein sequence ID" value="AAL19200.1"/>
    <property type="molecule type" value="Genomic_DNA"/>
</dbReference>
<dbReference type="RefSeq" id="WP_000210056.1">
    <property type="nucleotide sequence ID" value="NC_003197.2"/>
</dbReference>
<dbReference type="SMR" id="Q8ZRN5"/>
<dbReference type="STRING" id="99287.STM0236"/>
<dbReference type="PaxDb" id="99287-STM0236"/>
<dbReference type="KEGG" id="stm:STM0236"/>
<dbReference type="PATRIC" id="fig|99287.12.peg.249"/>
<dbReference type="HOGENOM" id="CLU_018869_2_0_6"/>
<dbReference type="OMA" id="QTETFFL"/>
<dbReference type="PhylomeDB" id="Q8ZRN5"/>
<dbReference type="BioCyc" id="SENT99287:STM0236-MONOMER"/>
<dbReference type="Proteomes" id="UP000001014">
    <property type="component" value="Chromosome"/>
</dbReference>
<dbReference type="GO" id="GO:0005737">
    <property type="term" value="C:cytoplasm"/>
    <property type="evidence" value="ECO:0007669"/>
    <property type="project" value="UniProtKB-SubCell"/>
</dbReference>
<dbReference type="GO" id="GO:0005524">
    <property type="term" value="F:ATP binding"/>
    <property type="evidence" value="ECO:0007669"/>
    <property type="project" value="UniProtKB-UniRule"/>
</dbReference>
<dbReference type="GO" id="GO:0032267">
    <property type="term" value="F:tRNA(Ile)-lysidine synthase activity"/>
    <property type="evidence" value="ECO:0007669"/>
    <property type="project" value="UniProtKB-EC"/>
</dbReference>
<dbReference type="GO" id="GO:0006400">
    <property type="term" value="P:tRNA modification"/>
    <property type="evidence" value="ECO:0007669"/>
    <property type="project" value="UniProtKB-UniRule"/>
</dbReference>
<dbReference type="CDD" id="cd01992">
    <property type="entry name" value="TilS_N"/>
    <property type="match status" value="1"/>
</dbReference>
<dbReference type="FunFam" id="3.40.50.620:FF:000173">
    <property type="entry name" value="tRNA(Ile)-lysidine synthase"/>
    <property type="match status" value="1"/>
</dbReference>
<dbReference type="Gene3D" id="1.20.59.20">
    <property type="match status" value="1"/>
</dbReference>
<dbReference type="Gene3D" id="3.40.50.620">
    <property type="entry name" value="HUPs"/>
    <property type="match status" value="1"/>
</dbReference>
<dbReference type="HAMAP" id="MF_01161">
    <property type="entry name" value="tRNA_Ile_lys_synt"/>
    <property type="match status" value="1"/>
</dbReference>
<dbReference type="InterPro" id="IPR012796">
    <property type="entry name" value="Lysidine-tRNA-synth_C"/>
</dbReference>
<dbReference type="InterPro" id="IPR014729">
    <property type="entry name" value="Rossmann-like_a/b/a_fold"/>
</dbReference>
<dbReference type="InterPro" id="IPR011063">
    <property type="entry name" value="TilS/TtcA_N"/>
</dbReference>
<dbReference type="InterPro" id="IPR012094">
    <property type="entry name" value="tRNA_Ile_lys_synt"/>
</dbReference>
<dbReference type="InterPro" id="IPR012795">
    <property type="entry name" value="tRNA_Ile_lys_synt_N"/>
</dbReference>
<dbReference type="InterPro" id="IPR015262">
    <property type="entry name" value="tRNA_Ile_lys_synt_subst-bd"/>
</dbReference>
<dbReference type="NCBIfam" id="TIGR02433">
    <property type="entry name" value="lysidine_TilS_C"/>
    <property type="match status" value="1"/>
</dbReference>
<dbReference type="NCBIfam" id="TIGR02432">
    <property type="entry name" value="lysidine_TilS_N"/>
    <property type="match status" value="1"/>
</dbReference>
<dbReference type="NCBIfam" id="NF007942">
    <property type="entry name" value="PRK10660.1"/>
    <property type="match status" value="1"/>
</dbReference>
<dbReference type="PANTHER" id="PTHR43033">
    <property type="entry name" value="TRNA(ILE)-LYSIDINE SYNTHASE-RELATED"/>
    <property type="match status" value="1"/>
</dbReference>
<dbReference type="PANTHER" id="PTHR43033:SF1">
    <property type="entry name" value="TRNA(ILE)-LYSIDINE SYNTHASE-RELATED"/>
    <property type="match status" value="1"/>
</dbReference>
<dbReference type="Pfam" id="PF01171">
    <property type="entry name" value="ATP_bind_3"/>
    <property type="match status" value="1"/>
</dbReference>
<dbReference type="Pfam" id="PF09179">
    <property type="entry name" value="TilS"/>
    <property type="match status" value="1"/>
</dbReference>
<dbReference type="Pfam" id="PF11734">
    <property type="entry name" value="TilS_C"/>
    <property type="match status" value="1"/>
</dbReference>
<dbReference type="SMART" id="SM00977">
    <property type="entry name" value="TilS_C"/>
    <property type="match status" value="1"/>
</dbReference>
<dbReference type="SUPFAM" id="SSF52402">
    <property type="entry name" value="Adenine nucleotide alpha hydrolases-like"/>
    <property type="match status" value="1"/>
</dbReference>
<dbReference type="SUPFAM" id="SSF82829">
    <property type="entry name" value="MesJ substrate recognition domain-like"/>
    <property type="match status" value="1"/>
</dbReference>
<dbReference type="SUPFAM" id="SSF56037">
    <property type="entry name" value="PheT/TilS domain"/>
    <property type="match status" value="1"/>
</dbReference>
<accession>Q8ZRN5</accession>
<organism>
    <name type="scientific">Salmonella typhimurium (strain LT2 / SGSC1412 / ATCC 700720)</name>
    <dbReference type="NCBI Taxonomy" id="99287"/>
    <lineage>
        <taxon>Bacteria</taxon>
        <taxon>Pseudomonadati</taxon>
        <taxon>Pseudomonadota</taxon>
        <taxon>Gammaproteobacteria</taxon>
        <taxon>Enterobacterales</taxon>
        <taxon>Enterobacteriaceae</taxon>
        <taxon>Salmonella</taxon>
    </lineage>
</organism>
<feature type="chain" id="PRO_0000181761" description="tRNA(Ile)-lysidine synthase">
    <location>
        <begin position="1"/>
        <end position="430"/>
    </location>
</feature>
<feature type="binding site" evidence="1">
    <location>
        <begin position="21"/>
        <end position="26"/>
    </location>
    <ligand>
        <name>ATP</name>
        <dbReference type="ChEBI" id="CHEBI:30616"/>
    </ligand>
</feature>
<gene>
    <name evidence="1" type="primary">tilS</name>
    <name type="ordered locus">STM0236</name>
</gene>
<evidence type="ECO:0000255" key="1">
    <source>
        <dbReference type="HAMAP-Rule" id="MF_01161"/>
    </source>
</evidence>
<comment type="function">
    <text evidence="1">Ligates lysine onto the cytidine present at position 34 of the AUA codon-specific tRNA(Ile) that contains the anticodon CAU, in an ATP-dependent manner. Cytidine is converted to lysidine, thus changing the amino acid specificity of the tRNA from methionine to isoleucine.</text>
</comment>
<comment type="catalytic activity">
    <reaction evidence="1">
        <text>cytidine(34) in tRNA(Ile2) + L-lysine + ATP = lysidine(34) in tRNA(Ile2) + AMP + diphosphate + H(+)</text>
        <dbReference type="Rhea" id="RHEA:43744"/>
        <dbReference type="Rhea" id="RHEA-COMP:10625"/>
        <dbReference type="Rhea" id="RHEA-COMP:10670"/>
        <dbReference type="ChEBI" id="CHEBI:15378"/>
        <dbReference type="ChEBI" id="CHEBI:30616"/>
        <dbReference type="ChEBI" id="CHEBI:32551"/>
        <dbReference type="ChEBI" id="CHEBI:33019"/>
        <dbReference type="ChEBI" id="CHEBI:82748"/>
        <dbReference type="ChEBI" id="CHEBI:83665"/>
        <dbReference type="ChEBI" id="CHEBI:456215"/>
        <dbReference type="EC" id="6.3.4.19"/>
    </reaction>
</comment>
<comment type="subcellular location">
    <subcellularLocation>
        <location evidence="1">Cytoplasm</location>
    </subcellularLocation>
</comment>
<comment type="domain">
    <text>The N-terminal region contains the highly conserved SGGXDS motif, predicted to be a P-loop motif involved in ATP binding.</text>
</comment>
<comment type="similarity">
    <text evidence="1">Belongs to the tRNA(Ile)-lysidine synthase family.</text>
</comment>
<protein>
    <recommendedName>
        <fullName evidence="1">tRNA(Ile)-lysidine synthase</fullName>
        <ecNumber evidence="1">6.3.4.19</ecNumber>
    </recommendedName>
    <alternativeName>
        <fullName evidence="1">tRNA(Ile)-2-lysyl-cytidine synthase</fullName>
    </alternativeName>
    <alternativeName>
        <fullName evidence="1">tRNA(Ile)-lysidine synthetase</fullName>
    </alternativeName>
</protein>
<reference key="1">
    <citation type="journal article" date="2001" name="Nature">
        <title>Complete genome sequence of Salmonella enterica serovar Typhimurium LT2.</title>
        <authorList>
            <person name="McClelland M."/>
            <person name="Sanderson K.E."/>
            <person name="Spieth J."/>
            <person name="Clifton S.W."/>
            <person name="Latreille P."/>
            <person name="Courtney L."/>
            <person name="Porwollik S."/>
            <person name="Ali J."/>
            <person name="Dante M."/>
            <person name="Du F."/>
            <person name="Hou S."/>
            <person name="Layman D."/>
            <person name="Leonard S."/>
            <person name="Nguyen C."/>
            <person name="Scott K."/>
            <person name="Holmes A."/>
            <person name="Grewal N."/>
            <person name="Mulvaney E."/>
            <person name="Ryan E."/>
            <person name="Sun H."/>
            <person name="Florea L."/>
            <person name="Miller W."/>
            <person name="Stoneking T."/>
            <person name="Nhan M."/>
            <person name="Waterston R."/>
            <person name="Wilson R.K."/>
        </authorList>
    </citation>
    <scope>NUCLEOTIDE SEQUENCE [LARGE SCALE GENOMIC DNA]</scope>
    <source>
        <strain>LT2 / SGSC1412 / ATCC 700720</strain>
    </source>
</reference>
<proteinExistence type="inferred from homology"/>
<name>TILS_SALTY</name>
<keyword id="KW-0067">ATP-binding</keyword>
<keyword id="KW-0963">Cytoplasm</keyword>
<keyword id="KW-0436">Ligase</keyword>
<keyword id="KW-0547">Nucleotide-binding</keyword>
<keyword id="KW-1185">Reference proteome</keyword>
<keyword id="KW-0819">tRNA processing</keyword>
<sequence>MTTLTLNTSLLSSRRILAAFSGGLDSTVLLHQLVLWRERHPDVTLRAIHIHHGLSPHADSWVRHCETVCERWQVPLVVERVTLADNGLGIEAHAREARYRAFAQTLLPGEVLATAQHLDDQCETFLLALKRGSGPAGLSAMGERSPFAGTLLLRPLLRETRKTLEQWAVRHGLCWIEDESNQDDAYDRNFLRLRALPLLQQRWPHFPAAVARSATLCAEQERLLDELLASDLTDCITAEGTLRLSPLMSMSDVRRAAILRRWLAMRNAPMPSRDALERIWQEVALARDDASPCLRFGDHEIRRYQSQLWWIKSVAGQHETTVAWPVWQTPLALPAGLGTVQLVPGGELRRPREEESVSIRFKAPGVLHIVGRNGGRKLKKIWQEQGIPPWRRDTTPLLFYGETLIAAAGVFVTREGAAEDKEGVSLVWHA</sequence>